<name>MATRX_PI1HC</name>
<feature type="chain" id="PRO_0000142763" description="Matrix protein">
    <location>
        <begin position="1"/>
        <end position="348"/>
    </location>
</feature>
<feature type="disulfide bond" evidence="1">
    <location>
        <begin position="251"/>
        <end position="295"/>
    </location>
</feature>
<comment type="function">
    <text>The M protein has a crucial role in virus assembly and interacts with the RNP complex as well as with the viral membrane.</text>
</comment>
<comment type="subcellular location">
    <subcellularLocation>
        <location evidence="1">Virion</location>
    </subcellularLocation>
</comment>
<comment type="similarity">
    <text evidence="1">Belongs to the morbillivirus/respirovirus/rubulavirus M protein family.</text>
</comment>
<gene>
    <name type="primary">M</name>
</gene>
<accession>Q01427</accession>
<organismHost>
    <name type="scientific">Homo sapiens</name>
    <name type="common">Human</name>
    <dbReference type="NCBI Taxonomy" id="9606"/>
</organismHost>
<dbReference type="EMBL" id="M80818">
    <property type="protein sequence ID" value="AAA46861.1"/>
    <property type="molecule type" value="Genomic_RNA"/>
</dbReference>
<dbReference type="PIR" id="A44218">
    <property type="entry name" value="MFNZC3"/>
</dbReference>
<dbReference type="SMR" id="Q01427"/>
<dbReference type="GO" id="GO:0019031">
    <property type="term" value="C:viral envelope"/>
    <property type="evidence" value="ECO:0007669"/>
    <property type="project" value="UniProtKB-KW"/>
</dbReference>
<dbReference type="GO" id="GO:0039660">
    <property type="term" value="F:structural constituent of virion"/>
    <property type="evidence" value="ECO:0007669"/>
    <property type="project" value="UniProtKB-KW"/>
</dbReference>
<dbReference type="GO" id="GO:0019068">
    <property type="term" value="P:virion assembly"/>
    <property type="evidence" value="ECO:0007669"/>
    <property type="project" value="InterPro"/>
</dbReference>
<dbReference type="Gene3D" id="2.70.20.60">
    <property type="entry name" value="Viral matrix protein, C-terminal domain"/>
    <property type="match status" value="1"/>
</dbReference>
<dbReference type="Gene3D" id="2.70.20.50">
    <property type="entry name" value="Viral matrix protein, N-terminal domain"/>
    <property type="match status" value="1"/>
</dbReference>
<dbReference type="InterPro" id="IPR042539">
    <property type="entry name" value="Matrix_C"/>
</dbReference>
<dbReference type="InterPro" id="IPR042540">
    <property type="entry name" value="Matrix_N"/>
</dbReference>
<dbReference type="InterPro" id="IPR055413">
    <property type="entry name" value="Matrix_Paramyxo_C"/>
</dbReference>
<dbReference type="InterPro" id="IPR000982">
    <property type="entry name" value="Matrix_Paramyxo_N"/>
</dbReference>
<dbReference type="Pfam" id="PF23765">
    <property type="entry name" value="Matrix_Paramyxo_C"/>
    <property type="match status" value="1"/>
</dbReference>
<dbReference type="Pfam" id="PF00661">
    <property type="entry name" value="Matrix_Paramyxo_N"/>
    <property type="match status" value="1"/>
</dbReference>
<evidence type="ECO:0000305" key="1"/>
<sequence>MAETYRFPRFSHEENGTVEPLPLKTGPDKKAIPHIRIVKVGDPPKHGVRYLDVLLLGFFETPKQGPLSGSISDLTESTSYSICGSGSLPIGIAKYYGTDQELLKACIDLKITVRRTVRSGEMIVYMVDSIHAPLLPWSGRLRQGMIYNANKVALAPQCLPVDKDIRFRVVFVNGTSLGTITIAKVPKTLADLALPNSISVNLLVTLKAGVSTEQKGILPVLDDDGEKKLNFMVHLGIIRRKVGKIYSVEYCKNKIEKMKLIFSLGLVGGISFHVHATGTLSKTLMSQLAWKKAVCYPLMDVNPHMNLVIWAASVEITSVDAVFQPAIPKEFRYYPNVVAKSIGKIRKI</sequence>
<reference key="1">
    <citation type="journal article" date="1992" name="Virology">
        <title>Sequence characterization and expression of the matrix protein gene of human parainfluenza virus type 1.</title>
        <authorList>
            <person name="Power U.F."/>
            <person name="Ryan K.W."/>
            <person name="Portner A."/>
        </authorList>
    </citation>
    <scope>NUCLEOTIDE SEQUENCE [GENOMIC RNA]</scope>
</reference>
<proteinExistence type="inferred from homology"/>
<protein>
    <recommendedName>
        <fullName>Matrix protein</fullName>
    </recommendedName>
</protein>
<organism>
    <name type="scientific">Human parainfluenza 1 virus (strain C39)</name>
    <name type="common">HPIV-1</name>
    <dbReference type="NCBI Taxonomy" id="11210"/>
    <lineage>
        <taxon>Viruses</taxon>
        <taxon>Riboviria</taxon>
        <taxon>Orthornavirae</taxon>
        <taxon>Negarnaviricota</taxon>
        <taxon>Haploviricotina</taxon>
        <taxon>Monjiviricetes</taxon>
        <taxon>Mononegavirales</taxon>
        <taxon>Paramyxoviridae</taxon>
        <taxon>Feraresvirinae</taxon>
        <taxon>Respirovirus</taxon>
        <taxon>Respirovirus laryngotracheitidis</taxon>
    </lineage>
</organism>
<keyword id="KW-1015">Disulfide bond</keyword>
<keyword id="KW-0261">Viral envelope protein</keyword>
<keyword id="KW-0468">Viral matrix protein</keyword>
<keyword id="KW-0946">Virion</keyword>